<dbReference type="EC" id="2.7.7.56" evidence="1"/>
<dbReference type="EMBL" id="CP001280">
    <property type="protein sequence ID" value="ACK51089.1"/>
    <property type="molecule type" value="Genomic_DNA"/>
</dbReference>
<dbReference type="RefSeq" id="WP_012591159.1">
    <property type="nucleotide sequence ID" value="NC_011666.1"/>
</dbReference>
<dbReference type="SMR" id="B8ERN7"/>
<dbReference type="STRING" id="395965.Msil_2151"/>
<dbReference type="KEGG" id="msl:Msil_2151"/>
<dbReference type="eggNOG" id="COG0689">
    <property type="taxonomic scope" value="Bacteria"/>
</dbReference>
<dbReference type="HOGENOM" id="CLU_050858_0_0_5"/>
<dbReference type="OrthoDB" id="9802265at2"/>
<dbReference type="Proteomes" id="UP000002257">
    <property type="component" value="Chromosome"/>
</dbReference>
<dbReference type="GO" id="GO:0000175">
    <property type="term" value="F:3'-5'-RNA exonuclease activity"/>
    <property type="evidence" value="ECO:0007669"/>
    <property type="project" value="UniProtKB-UniRule"/>
</dbReference>
<dbReference type="GO" id="GO:0000049">
    <property type="term" value="F:tRNA binding"/>
    <property type="evidence" value="ECO:0007669"/>
    <property type="project" value="UniProtKB-UniRule"/>
</dbReference>
<dbReference type="GO" id="GO:0009022">
    <property type="term" value="F:tRNA nucleotidyltransferase activity"/>
    <property type="evidence" value="ECO:0007669"/>
    <property type="project" value="UniProtKB-UniRule"/>
</dbReference>
<dbReference type="GO" id="GO:0016075">
    <property type="term" value="P:rRNA catabolic process"/>
    <property type="evidence" value="ECO:0007669"/>
    <property type="project" value="UniProtKB-UniRule"/>
</dbReference>
<dbReference type="GO" id="GO:0006364">
    <property type="term" value="P:rRNA processing"/>
    <property type="evidence" value="ECO:0007669"/>
    <property type="project" value="UniProtKB-KW"/>
</dbReference>
<dbReference type="GO" id="GO:0008033">
    <property type="term" value="P:tRNA processing"/>
    <property type="evidence" value="ECO:0007669"/>
    <property type="project" value="UniProtKB-UniRule"/>
</dbReference>
<dbReference type="CDD" id="cd11362">
    <property type="entry name" value="RNase_PH_bact"/>
    <property type="match status" value="1"/>
</dbReference>
<dbReference type="FunFam" id="3.30.230.70:FF:000003">
    <property type="entry name" value="Ribonuclease PH"/>
    <property type="match status" value="1"/>
</dbReference>
<dbReference type="Gene3D" id="3.30.230.70">
    <property type="entry name" value="GHMP Kinase, N-terminal domain"/>
    <property type="match status" value="1"/>
</dbReference>
<dbReference type="HAMAP" id="MF_00564">
    <property type="entry name" value="RNase_PH"/>
    <property type="match status" value="1"/>
</dbReference>
<dbReference type="InterPro" id="IPR001247">
    <property type="entry name" value="ExoRNase_PH_dom1"/>
</dbReference>
<dbReference type="InterPro" id="IPR015847">
    <property type="entry name" value="ExoRNase_PH_dom2"/>
</dbReference>
<dbReference type="InterPro" id="IPR036345">
    <property type="entry name" value="ExoRNase_PH_dom2_sf"/>
</dbReference>
<dbReference type="InterPro" id="IPR027408">
    <property type="entry name" value="PNPase/RNase_PH_dom_sf"/>
</dbReference>
<dbReference type="InterPro" id="IPR020568">
    <property type="entry name" value="Ribosomal_Su5_D2-typ_SF"/>
</dbReference>
<dbReference type="InterPro" id="IPR050080">
    <property type="entry name" value="RNase_PH"/>
</dbReference>
<dbReference type="InterPro" id="IPR002381">
    <property type="entry name" value="RNase_PH_bac-type"/>
</dbReference>
<dbReference type="InterPro" id="IPR018336">
    <property type="entry name" value="RNase_PH_CS"/>
</dbReference>
<dbReference type="NCBIfam" id="TIGR01966">
    <property type="entry name" value="RNasePH"/>
    <property type="match status" value="1"/>
</dbReference>
<dbReference type="PANTHER" id="PTHR11953">
    <property type="entry name" value="EXOSOME COMPLEX COMPONENT"/>
    <property type="match status" value="1"/>
</dbReference>
<dbReference type="PANTHER" id="PTHR11953:SF0">
    <property type="entry name" value="EXOSOME COMPLEX COMPONENT RRP41"/>
    <property type="match status" value="1"/>
</dbReference>
<dbReference type="Pfam" id="PF01138">
    <property type="entry name" value="RNase_PH"/>
    <property type="match status" value="1"/>
</dbReference>
<dbReference type="Pfam" id="PF03725">
    <property type="entry name" value="RNase_PH_C"/>
    <property type="match status" value="1"/>
</dbReference>
<dbReference type="SUPFAM" id="SSF55666">
    <property type="entry name" value="Ribonuclease PH domain 2-like"/>
    <property type="match status" value="1"/>
</dbReference>
<dbReference type="SUPFAM" id="SSF54211">
    <property type="entry name" value="Ribosomal protein S5 domain 2-like"/>
    <property type="match status" value="1"/>
</dbReference>
<dbReference type="PROSITE" id="PS01277">
    <property type="entry name" value="RIBONUCLEASE_PH"/>
    <property type="match status" value="1"/>
</dbReference>
<sequence>MRPSQRAADELRPVTFERNVARYAEGSCLIKFGSTHVLCTASLEDKPPAWLRGQGRGWVSAEYAMLPRATHTRTKRESTTGKPSGRTQEIQRLIGRSLRAVTNLQGLGERQITIDCDVLQADGGTRTAAITGAWVALHDCLKWMRQRSIIKDLPLRDHVAAISCGVSNGESVLDLDYAEDSAAETDANFVITGSGSLVEVQATAEGAVFTETQLTAMLALARGGITTLVEMQKAAVA</sequence>
<keyword id="KW-0548">Nucleotidyltransferase</keyword>
<keyword id="KW-1185">Reference proteome</keyword>
<keyword id="KW-0694">RNA-binding</keyword>
<keyword id="KW-0698">rRNA processing</keyword>
<keyword id="KW-0808">Transferase</keyword>
<keyword id="KW-0819">tRNA processing</keyword>
<keyword id="KW-0820">tRNA-binding</keyword>
<accession>B8ERN7</accession>
<proteinExistence type="inferred from homology"/>
<comment type="function">
    <text evidence="1">Phosphorolytic 3'-5' exoribonuclease that plays an important role in tRNA 3'-end maturation. Removes nucleotide residues following the 3'-CCA terminus of tRNAs; can also add nucleotides to the ends of RNA molecules by using nucleoside diphosphates as substrates, but this may not be physiologically important. Probably plays a role in initiation of 16S rRNA degradation (leading to ribosome degradation) during starvation.</text>
</comment>
<comment type="catalytic activity">
    <reaction evidence="1">
        <text>tRNA(n+1) + phosphate = tRNA(n) + a ribonucleoside 5'-diphosphate</text>
        <dbReference type="Rhea" id="RHEA:10628"/>
        <dbReference type="Rhea" id="RHEA-COMP:17343"/>
        <dbReference type="Rhea" id="RHEA-COMP:17344"/>
        <dbReference type="ChEBI" id="CHEBI:43474"/>
        <dbReference type="ChEBI" id="CHEBI:57930"/>
        <dbReference type="ChEBI" id="CHEBI:173114"/>
        <dbReference type="EC" id="2.7.7.56"/>
    </reaction>
</comment>
<comment type="subunit">
    <text evidence="1">Homohexameric ring arranged as a trimer of dimers.</text>
</comment>
<comment type="similarity">
    <text evidence="1">Belongs to the RNase PH family.</text>
</comment>
<evidence type="ECO:0000255" key="1">
    <source>
        <dbReference type="HAMAP-Rule" id="MF_00564"/>
    </source>
</evidence>
<feature type="chain" id="PRO_1000146781" description="Ribonuclease PH">
    <location>
        <begin position="1"/>
        <end position="237"/>
    </location>
</feature>
<feature type="binding site" evidence="1">
    <location>
        <position position="86"/>
    </location>
    <ligand>
        <name>phosphate</name>
        <dbReference type="ChEBI" id="CHEBI:43474"/>
        <note>substrate</note>
    </ligand>
</feature>
<feature type="binding site" evidence="1">
    <location>
        <begin position="124"/>
        <end position="126"/>
    </location>
    <ligand>
        <name>phosphate</name>
        <dbReference type="ChEBI" id="CHEBI:43474"/>
        <note>substrate</note>
    </ligand>
</feature>
<gene>
    <name evidence="1" type="primary">rph</name>
    <name type="ordered locus">Msil_2151</name>
</gene>
<name>RNPH_METSB</name>
<protein>
    <recommendedName>
        <fullName evidence="1">Ribonuclease PH</fullName>
        <shortName evidence="1">RNase PH</shortName>
        <ecNumber evidence="1">2.7.7.56</ecNumber>
    </recommendedName>
    <alternativeName>
        <fullName evidence="1">tRNA nucleotidyltransferase</fullName>
    </alternativeName>
</protein>
<reference key="1">
    <citation type="journal article" date="2010" name="J. Bacteriol.">
        <title>Complete genome sequence of the aerobic facultative methanotroph Methylocella silvestris BL2.</title>
        <authorList>
            <person name="Chen Y."/>
            <person name="Crombie A."/>
            <person name="Rahman M.T."/>
            <person name="Dedysh S.N."/>
            <person name="Liesack W."/>
            <person name="Stott M.B."/>
            <person name="Alam M."/>
            <person name="Theisen A.R."/>
            <person name="Murrell J.C."/>
            <person name="Dunfield P.F."/>
        </authorList>
    </citation>
    <scope>NUCLEOTIDE SEQUENCE [LARGE SCALE GENOMIC DNA]</scope>
    <source>
        <strain>DSM 15510 / CIP 108128 / LMG 27833 / NCIMB 13906 / BL2</strain>
    </source>
</reference>
<organism>
    <name type="scientific">Methylocella silvestris (strain DSM 15510 / CIP 108128 / LMG 27833 / NCIMB 13906 / BL2)</name>
    <dbReference type="NCBI Taxonomy" id="395965"/>
    <lineage>
        <taxon>Bacteria</taxon>
        <taxon>Pseudomonadati</taxon>
        <taxon>Pseudomonadota</taxon>
        <taxon>Alphaproteobacteria</taxon>
        <taxon>Hyphomicrobiales</taxon>
        <taxon>Beijerinckiaceae</taxon>
        <taxon>Methylocella</taxon>
    </lineage>
</organism>